<dbReference type="EC" id="2.1.3.15" evidence="1"/>
<dbReference type="EMBL" id="CP000672">
    <property type="protein sequence ID" value="ABQ99405.1"/>
    <property type="molecule type" value="Genomic_DNA"/>
</dbReference>
<dbReference type="SMR" id="A5UF50"/>
<dbReference type="KEGG" id="hiq:CGSHiGG_01705"/>
<dbReference type="HOGENOM" id="CLU_015486_1_0_6"/>
<dbReference type="UniPathway" id="UPA00655">
    <property type="reaction ID" value="UER00711"/>
</dbReference>
<dbReference type="Proteomes" id="UP000001990">
    <property type="component" value="Chromosome"/>
</dbReference>
<dbReference type="GO" id="GO:0009329">
    <property type="term" value="C:acetate CoA-transferase complex"/>
    <property type="evidence" value="ECO:0007669"/>
    <property type="project" value="TreeGrafter"/>
</dbReference>
<dbReference type="GO" id="GO:0003989">
    <property type="term" value="F:acetyl-CoA carboxylase activity"/>
    <property type="evidence" value="ECO:0007669"/>
    <property type="project" value="InterPro"/>
</dbReference>
<dbReference type="GO" id="GO:0005524">
    <property type="term" value="F:ATP binding"/>
    <property type="evidence" value="ECO:0007669"/>
    <property type="project" value="UniProtKB-KW"/>
</dbReference>
<dbReference type="GO" id="GO:0016743">
    <property type="term" value="F:carboxyl- or carbamoyltransferase activity"/>
    <property type="evidence" value="ECO:0007669"/>
    <property type="project" value="UniProtKB-UniRule"/>
</dbReference>
<dbReference type="GO" id="GO:0008270">
    <property type="term" value="F:zinc ion binding"/>
    <property type="evidence" value="ECO:0007669"/>
    <property type="project" value="UniProtKB-UniRule"/>
</dbReference>
<dbReference type="GO" id="GO:0006633">
    <property type="term" value="P:fatty acid biosynthetic process"/>
    <property type="evidence" value="ECO:0007669"/>
    <property type="project" value="UniProtKB-KW"/>
</dbReference>
<dbReference type="GO" id="GO:2001295">
    <property type="term" value="P:malonyl-CoA biosynthetic process"/>
    <property type="evidence" value="ECO:0007669"/>
    <property type="project" value="UniProtKB-UniRule"/>
</dbReference>
<dbReference type="Gene3D" id="3.90.226.10">
    <property type="entry name" value="2-enoyl-CoA Hydratase, Chain A, domain 1"/>
    <property type="match status" value="1"/>
</dbReference>
<dbReference type="HAMAP" id="MF_01395">
    <property type="entry name" value="AcetylCoA_CT_beta"/>
    <property type="match status" value="1"/>
</dbReference>
<dbReference type="InterPro" id="IPR034733">
    <property type="entry name" value="AcCoA_carboxyl_beta"/>
</dbReference>
<dbReference type="InterPro" id="IPR000438">
    <property type="entry name" value="Acetyl_CoA_COase_Trfase_b_su"/>
</dbReference>
<dbReference type="InterPro" id="IPR029045">
    <property type="entry name" value="ClpP/crotonase-like_dom_sf"/>
</dbReference>
<dbReference type="InterPro" id="IPR011762">
    <property type="entry name" value="COA_CT_N"/>
</dbReference>
<dbReference type="InterPro" id="IPR041010">
    <property type="entry name" value="Znf-ACC"/>
</dbReference>
<dbReference type="NCBIfam" id="TIGR00515">
    <property type="entry name" value="accD"/>
    <property type="match status" value="1"/>
</dbReference>
<dbReference type="PANTHER" id="PTHR42995">
    <property type="entry name" value="ACETYL-COENZYME A CARBOXYLASE CARBOXYL TRANSFERASE SUBUNIT BETA, CHLOROPLASTIC"/>
    <property type="match status" value="1"/>
</dbReference>
<dbReference type="PANTHER" id="PTHR42995:SF5">
    <property type="entry name" value="ACETYL-COENZYME A CARBOXYLASE CARBOXYL TRANSFERASE SUBUNIT BETA, CHLOROPLASTIC"/>
    <property type="match status" value="1"/>
</dbReference>
<dbReference type="Pfam" id="PF01039">
    <property type="entry name" value="Carboxyl_trans"/>
    <property type="match status" value="1"/>
</dbReference>
<dbReference type="Pfam" id="PF17848">
    <property type="entry name" value="Zn_ribbon_ACC"/>
    <property type="match status" value="1"/>
</dbReference>
<dbReference type="PRINTS" id="PR01070">
    <property type="entry name" value="ACCCTRFRASEB"/>
</dbReference>
<dbReference type="SUPFAM" id="SSF52096">
    <property type="entry name" value="ClpP/crotonase"/>
    <property type="match status" value="1"/>
</dbReference>
<dbReference type="PROSITE" id="PS50980">
    <property type="entry name" value="COA_CT_NTER"/>
    <property type="match status" value="1"/>
</dbReference>
<comment type="function">
    <text evidence="1">Component of the acetyl coenzyme A carboxylase (ACC) complex. Biotin carboxylase (BC) catalyzes the carboxylation of biotin on its carrier protein (BCCP) and then the CO(2) group is transferred by the transcarboxylase to acetyl-CoA to form malonyl-CoA.</text>
</comment>
<comment type="catalytic activity">
    <reaction evidence="1">
        <text>N(6)-carboxybiotinyl-L-lysyl-[protein] + acetyl-CoA = N(6)-biotinyl-L-lysyl-[protein] + malonyl-CoA</text>
        <dbReference type="Rhea" id="RHEA:54728"/>
        <dbReference type="Rhea" id="RHEA-COMP:10505"/>
        <dbReference type="Rhea" id="RHEA-COMP:10506"/>
        <dbReference type="ChEBI" id="CHEBI:57288"/>
        <dbReference type="ChEBI" id="CHEBI:57384"/>
        <dbReference type="ChEBI" id="CHEBI:83144"/>
        <dbReference type="ChEBI" id="CHEBI:83145"/>
        <dbReference type="EC" id="2.1.3.15"/>
    </reaction>
</comment>
<comment type="cofactor">
    <cofactor evidence="1">
        <name>Zn(2+)</name>
        <dbReference type="ChEBI" id="CHEBI:29105"/>
    </cofactor>
    <text evidence="1">Binds 1 zinc ion per subunit.</text>
</comment>
<comment type="pathway">
    <text evidence="1">Lipid metabolism; malonyl-CoA biosynthesis; malonyl-CoA from acetyl-CoA: step 1/1.</text>
</comment>
<comment type="subunit">
    <text evidence="1">Acetyl-CoA carboxylase is a heterohexamer composed of biotin carboxyl carrier protein (AccB), biotin carboxylase (AccC) and two subunits each of ACCase subunit alpha (AccA) and ACCase subunit beta (AccD).</text>
</comment>
<comment type="subcellular location">
    <subcellularLocation>
        <location evidence="1">Cytoplasm</location>
    </subcellularLocation>
</comment>
<comment type="similarity">
    <text evidence="1">Belongs to the AccD/PCCB family.</text>
</comment>
<accession>A5UF50</accession>
<keyword id="KW-0067">ATP-binding</keyword>
<keyword id="KW-0963">Cytoplasm</keyword>
<keyword id="KW-0275">Fatty acid biosynthesis</keyword>
<keyword id="KW-0276">Fatty acid metabolism</keyword>
<keyword id="KW-0444">Lipid biosynthesis</keyword>
<keyword id="KW-0443">Lipid metabolism</keyword>
<keyword id="KW-0479">Metal-binding</keyword>
<keyword id="KW-0547">Nucleotide-binding</keyword>
<keyword id="KW-0808">Transferase</keyword>
<keyword id="KW-0862">Zinc</keyword>
<keyword id="KW-0863">Zinc-finger</keyword>
<evidence type="ECO:0000255" key="1">
    <source>
        <dbReference type="HAMAP-Rule" id="MF_01395"/>
    </source>
</evidence>
<evidence type="ECO:0000255" key="2">
    <source>
        <dbReference type="PROSITE-ProRule" id="PRU01136"/>
    </source>
</evidence>
<name>ACCD_HAEIG</name>
<protein>
    <recommendedName>
        <fullName evidence="1">Acetyl-coenzyme A carboxylase carboxyl transferase subunit beta</fullName>
        <shortName evidence="1">ACCase subunit beta</shortName>
        <shortName evidence="1">Acetyl-CoA carboxylase carboxyltransferase subunit beta</shortName>
        <ecNumber evidence="1">2.1.3.15</ecNumber>
    </recommendedName>
</protein>
<sequence length="296" mass="32635">MSWINRIFSKSPSSSTRKANVPEGVWTKCTACEQVLYSEELKRNLYVCPKCGHHMRIDARERLLNLLDEDSSQEIAADLEPKDILKFKDLKKYKDRINAAQKETGEKDALITMTGTLYNMPIVVAASNFAFMGGSMGSVVGAKFVKAAEKAMEMNCPFVCFSASGGARMQEALFSLMQMAKTSAVLAQMREKGVPFISVLTDPTLGGVSASFAMLGDLNIAEPKALIGFAGPRVIEQTVREKLPEGFQRSEFLLEKGAIDMIVKRSEMRQTLASVLSKLTNQPSPFVEPELISEDE</sequence>
<reference key="1">
    <citation type="journal article" date="2007" name="Genome Biol.">
        <title>Characterization and modeling of the Haemophilus influenzae core and supragenomes based on the complete genomic sequences of Rd and 12 clinical nontypeable strains.</title>
        <authorList>
            <person name="Hogg J.S."/>
            <person name="Hu F.Z."/>
            <person name="Janto B."/>
            <person name="Boissy R."/>
            <person name="Hayes J."/>
            <person name="Keefe R."/>
            <person name="Post J.C."/>
            <person name="Ehrlich G.D."/>
        </authorList>
    </citation>
    <scope>NUCLEOTIDE SEQUENCE [LARGE SCALE GENOMIC DNA]</scope>
    <source>
        <strain>PittGG</strain>
    </source>
</reference>
<gene>
    <name evidence="1" type="primary">accD</name>
    <name type="ordered locus">CGSHiGG_01705</name>
</gene>
<proteinExistence type="inferred from homology"/>
<organism>
    <name type="scientific">Haemophilus influenzae (strain PittGG)</name>
    <dbReference type="NCBI Taxonomy" id="374931"/>
    <lineage>
        <taxon>Bacteria</taxon>
        <taxon>Pseudomonadati</taxon>
        <taxon>Pseudomonadota</taxon>
        <taxon>Gammaproteobacteria</taxon>
        <taxon>Pasteurellales</taxon>
        <taxon>Pasteurellaceae</taxon>
        <taxon>Haemophilus</taxon>
    </lineage>
</organism>
<feature type="chain" id="PRO_0000358999" description="Acetyl-coenzyme A carboxylase carboxyl transferase subunit beta">
    <location>
        <begin position="1"/>
        <end position="296"/>
    </location>
</feature>
<feature type="domain" description="CoA carboxyltransferase N-terminal" evidence="2">
    <location>
        <begin position="25"/>
        <end position="294"/>
    </location>
</feature>
<feature type="zinc finger region" description="C4-type" evidence="1">
    <location>
        <begin position="29"/>
        <end position="51"/>
    </location>
</feature>
<feature type="binding site" evidence="1">
    <location>
        <position position="29"/>
    </location>
    <ligand>
        <name>Zn(2+)</name>
        <dbReference type="ChEBI" id="CHEBI:29105"/>
    </ligand>
</feature>
<feature type="binding site" evidence="1">
    <location>
        <position position="32"/>
    </location>
    <ligand>
        <name>Zn(2+)</name>
        <dbReference type="ChEBI" id="CHEBI:29105"/>
    </ligand>
</feature>
<feature type="binding site" evidence="1">
    <location>
        <position position="48"/>
    </location>
    <ligand>
        <name>Zn(2+)</name>
        <dbReference type="ChEBI" id="CHEBI:29105"/>
    </ligand>
</feature>
<feature type="binding site" evidence="1">
    <location>
        <position position="51"/>
    </location>
    <ligand>
        <name>Zn(2+)</name>
        <dbReference type="ChEBI" id="CHEBI:29105"/>
    </ligand>
</feature>